<evidence type="ECO:0000250" key="1">
    <source>
        <dbReference type="UniProtKB" id="O55102"/>
    </source>
</evidence>
<evidence type="ECO:0000250" key="2">
    <source>
        <dbReference type="UniProtKB" id="P78537"/>
    </source>
</evidence>
<evidence type="ECO:0000255" key="3"/>
<evidence type="ECO:0000256" key="4">
    <source>
        <dbReference type="SAM" id="MobiDB-lite"/>
    </source>
</evidence>
<evidence type="ECO:0000305" key="5"/>
<organism>
    <name type="scientific">Pongo abelii</name>
    <name type="common">Sumatran orangutan</name>
    <name type="synonym">Pongo pygmaeus abelii</name>
    <dbReference type="NCBI Taxonomy" id="9601"/>
    <lineage>
        <taxon>Eukaryota</taxon>
        <taxon>Metazoa</taxon>
        <taxon>Chordata</taxon>
        <taxon>Craniata</taxon>
        <taxon>Vertebrata</taxon>
        <taxon>Euteleostomi</taxon>
        <taxon>Mammalia</taxon>
        <taxon>Eutheria</taxon>
        <taxon>Euarchontoglires</taxon>
        <taxon>Primates</taxon>
        <taxon>Haplorrhini</taxon>
        <taxon>Catarrhini</taxon>
        <taxon>Hominidae</taxon>
        <taxon>Pongo</taxon>
    </lineage>
</organism>
<dbReference type="EC" id="2.3.1.-" evidence="2"/>
<dbReference type="EMBL" id="CR860096">
    <property type="protein sequence ID" value="CAH92242.1"/>
    <property type="status" value="ALT_INIT"/>
    <property type="molecule type" value="mRNA"/>
</dbReference>
<dbReference type="RefSeq" id="NP_001128967.2">
    <property type="nucleotide sequence ID" value="NM_001135495.2"/>
</dbReference>
<dbReference type="SMR" id="Q5R7L8"/>
<dbReference type="FunCoup" id="Q5R7L8">
    <property type="interactions" value="467"/>
</dbReference>
<dbReference type="STRING" id="9601.ENSPPYP00000005273"/>
<dbReference type="Ensembl" id="ENSPPYT00000005480.3">
    <property type="protein sequence ID" value="ENSPPYP00000005273.2"/>
    <property type="gene ID" value="ENSPPYG00000004627.3"/>
</dbReference>
<dbReference type="GeneID" id="100190807"/>
<dbReference type="KEGG" id="pon:100190807"/>
<dbReference type="CTD" id="2647"/>
<dbReference type="eggNOG" id="KOG3390">
    <property type="taxonomic scope" value="Eukaryota"/>
</dbReference>
<dbReference type="GeneTree" id="ENSGT00390000002689"/>
<dbReference type="HOGENOM" id="CLU_115602_3_0_1"/>
<dbReference type="InParanoid" id="Q5R7L8"/>
<dbReference type="OMA" id="THAMNSA"/>
<dbReference type="OrthoDB" id="20018at2759"/>
<dbReference type="TreeFam" id="TF314443"/>
<dbReference type="Proteomes" id="UP000001595">
    <property type="component" value="Chromosome 12"/>
</dbReference>
<dbReference type="GO" id="GO:1904115">
    <property type="term" value="C:axon cytoplasm"/>
    <property type="evidence" value="ECO:0007669"/>
    <property type="project" value="GOC"/>
</dbReference>
<dbReference type="GO" id="GO:0031083">
    <property type="term" value="C:BLOC-1 complex"/>
    <property type="evidence" value="ECO:0000250"/>
    <property type="project" value="UniProtKB"/>
</dbReference>
<dbReference type="GO" id="GO:0099078">
    <property type="term" value="C:BORC complex"/>
    <property type="evidence" value="ECO:0000250"/>
    <property type="project" value="UniProtKB"/>
</dbReference>
<dbReference type="GO" id="GO:0005829">
    <property type="term" value="C:cytosol"/>
    <property type="evidence" value="ECO:0000250"/>
    <property type="project" value="UniProtKB"/>
</dbReference>
<dbReference type="GO" id="GO:0005769">
    <property type="term" value="C:early endosome"/>
    <property type="evidence" value="ECO:0007669"/>
    <property type="project" value="Ensembl"/>
</dbReference>
<dbReference type="GO" id="GO:0005765">
    <property type="term" value="C:lysosomal membrane"/>
    <property type="evidence" value="ECO:0007669"/>
    <property type="project" value="UniProtKB-SubCell"/>
</dbReference>
<dbReference type="GO" id="GO:0005758">
    <property type="term" value="C:mitochondrial intermembrane space"/>
    <property type="evidence" value="ECO:0000250"/>
    <property type="project" value="UniProtKB"/>
</dbReference>
<dbReference type="GO" id="GO:0005759">
    <property type="term" value="C:mitochondrial matrix"/>
    <property type="evidence" value="ECO:0000250"/>
    <property type="project" value="UniProtKB"/>
</dbReference>
<dbReference type="GO" id="GO:0061733">
    <property type="term" value="F:protein-lysine-acetyltransferase activity"/>
    <property type="evidence" value="ECO:0000250"/>
    <property type="project" value="UniProtKB"/>
</dbReference>
<dbReference type="GO" id="GO:0009060">
    <property type="term" value="P:aerobic respiration"/>
    <property type="evidence" value="ECO:0000250"/>
    <property type="project" value="UniProtKB"/>
</dbReference>
<dbReference type="GO" id="GO:0008089">
    <property type="term" value="P:anterograde axonal transport"/>
    <property type="evidence" value="ECO:0000250"/>
    <property type="project" value="UniProtKB"/>
</dbReference>
<dbReference type="GO" id="GO:0048490">
    <property type="term" value="P:anterograde synaptic vesicle transport"/>
    <property type="evidence" value="ECO:0000250"/>
    <property type="project" value="UniProtKB"/>
</dbReference>
<dbReference type="GO" id="GO:0016197">
    <property type="term" value="P:endosomal transport"/>
    <property type="evidence" value="ECO:0007669"/>
    <property type="project" value="TreeGrafter"/>
</dbReference>
<dbReference type="GO" id="GO:0032418">
    <property type="term" value="P:lysosome localization"/>
    <property type="evidence" value="ECO:0000250"/>
    <property type="project" value="UniProtKB"/>
</dbReference>
<dbReference type="GO" id="GO:0031175">
    <property type="term" value="P:neuron projection development"/>
    <property type="evidence" value="ECO:0000250"/>
    <property type="project" value="UniProtKB"/>
</dbReference>
<dbReference type="GO" id="GO:0018394">
    <property type="term" value="P:peptidyl-lysine acetylation"/>
    <property type="evidence" value="ECO:0000250"/>
    <property type="project" value="UniProtKB"/>
</dbReference>
<dbReference type="InterPro" id="IPR009395">
    <property type="entry name" value="BLOC1S1"/>
</dbReference>
<dbReference type="PANTHER" id="PTHR13073:SF0">
    <property type="entry name" value="BIOGENESIS OF LYSOSOME-RELATED ORGANELLES COMPLEX 1 SUBUNIT 1"/>
    <property type="match status" value="1"/>
</dbReference>
<dbReference type="PANTHER" id="PTHR13073">
    <property type="entry name" value="BLOC-1 COMPLEX SUBUNIT 1"/>
    <property type="match status" value="1"/>
</dbReference>
<dbReference type="Pfam" id="PF06320">
    <property type="entry name" value="GCN5L1"/>
    <property type="match status" value="1"/>
</dbReference>
<keyword id="KW-0175">Coiled coil</keyword>
<keyword id="KW-0963">Cytoplasm</keyword>
<keyword id="KW-0458">Lysosome</keyword>
<keyword id="KW-0472">Membrane</keyword>
<keyword id="KW-0496">Mitochondrion</keyword>
<keyword id="KW-1185">Reference proteome</keyword>
<keyword id="KW-0808">Transferase</keyword>
<comment type="function">
    <text evidence="2">Component of the BLOC-1 complex, a complex that is required for normal biogenesis of lysosome-related organelles (LRO), such as platelet dense granules and melanosomes. In concert with the AP-3 complex, the BLOC-1 complex is required to target membrane protein cargos into vesicles assembled at cell bodies for delivery into neurites and nerve terminals. The BLOC-1 complex, in association with SNARE proteins, is also proposed to be involved in neurite extension. As part of the BORC complex may play a role in lysosomes movement and localization at the cell periphery. The BORC complex is most probably associated with the cytosolic face of lysosomes, may recruit ARL8B and couple lysosomes to microtubule plus-end-directed kinesin motor.</text>
</comment>
<comment type="function">
    <text evidence="2">Acts as a protein acetyltransferase. Negatively regulates aerobic respiration through mitochondrial protein lysine-acetylation. May counteract the action of the deacetylase SIRT3 by acetylating and regulating proteins of the mitochondrial respiratory chain including ATP5F1A and NDUFA9. Acts as a regulator of mTORC2 signaling in response to hypotoxic stress by mediating acetylation of RICTOR, thereby protecting RICTOR against ubiquitination and subsequent degradation by the proteasome.</text>
</comment>
<comment type="catalytic activity">
    <reaction evidence="2">
        <text>L-lysyl-[protein] + acetyl-CoA = N(6)-acetyl-L-lysyl-[protein] + CoA + H(+)</text>
        <dbReference type="Rhea" id="RHEA:45948"/>
        <dbReference type="Rhea" id="RHEA-COMP:9752"/>
        <dbReference type="Rhea" id="RHEA-COMP:10731"/>
        <dbReference type="ChEBI" id="CHEBI:15378"/>
        <dbReference type="ChEBI" id="CHEBI:29969"/>
        <dbReference type="ChEBI" id="CHEBI:57287"/>
        <dbReference type="ChEBI" id="CHEBI:57288"/>
        <dbReference type="ChEBI" id="CHEBI:61930"/>
    </reaction>
    <physiologicalReaction direction="left-to-right" evidence="2">
        <dbReference type="Rhea" id="RHEA:45949"/>
    </physiologicalReaction>
</comment>
<comment type="subunit">
    <text evidence="1 2">Component of the biogenesis of lysosome-related organelles complex 1 (BLOC-1) composed of BLOC1S1, BLOC1S2, BLOC1S3, BLOC1S4, BLOC1S5, BLOC1S6, DTNBP1/BLOC1S7 and SNAPIN/BLOC1S8. Octamer composed of one copy each BLOC1S1, BLOC1S2, BLOC1S3, BLOC1S4, BLOC1S5, BLOC1S6, DTNBP1/BLOC1S7 and SNAPIN/BLOC1S8. The BLOC-1 complex associates with the AP-3 protein complex and membrane protein cargos. Component of the BLOC-one-related complex (BORC) which is composed of BLOC1S1, BLOC1S2, BORCS5, BORCS6, BORCS7, BORCS8, KXD1 and SNAPIN. Interacts with ATP5F1A and NDUFA9; involved in their acetylation on lysine residues. Interacts with KXD1.</text>
</comment>
<comment type="subcellular location">
    <subcellularLocation>
        <location evidence="2">Mitochondrion intermembrane space</location>
    </subcellularLocation>
    <subcellularLocation>
        <location evidence="2">Mitochondrion matrix</location>
    </subcellularLocation>
    <subcellularLocation>
        <location evidence="2">Cytoplasm</location>
        <location evidence="2">Cytosol</location>
    </subcellularLocation>
    <subcellularLocation>
        <location evidence="2">Lysosome membrane</location>
    </subcellularLocation>
</comment>
<comment type="similarity">
    <text evidence="5">Belongs to the BLOC1S1 family.</text>
</comment>
<comment type="sequence caution" evidence="5">
    <conflict type="erroneous initiation">
        <sequence resource="EMBL-CDS" id="CAH92242"/>
    </conflict>
    <text>Truncated N-terminus.</text>
</comment>
<sequence>MAPGSRGERSSFRSRRGPGVPSPQPDVTMLSRLLKEHQAKQNERKELQEKRRREAITAATCLTEALVDHLNVGVAQAYMNQRKLDHEVKTLQVQAAQFAKQTGQWIGMVENFNQALKEIGDVENWARSIELDMRTIATALEYVYKGQLQSAPS</sequence>
<name>BL1S1_PONAB</name>
<feature type="chain" id="PRO_0000156333" description="Biogenesis of lysosome-related organelles complex 1 subunit 1">
    <location>
        <begin position="1"/>
        <end position="153"/>
    </location>
</feature>
<feature type="region of interest" description="Disordered" evidence="4">
    <location>
        <begin position="1"/>
        <end position="27"/>
    </location>
</feature>
<feature type="coiled-coil region" evidence="3">
    <location>
        <begin position="26"/>
        <end position="58"/>
    </location>
</feature>
<feature type="compositionally biased region" description="Basic and acidic residues" evidence="4">
    <location>
        <begin position="1"/>
        <end position="11"/>
    </location>
</feature>
<accession>Q5R7L8</accession>
<protein>
    <recommendedName>
        <fullName>Biogenesis of lysosome-related organelles complex 1 subunit 1</fullName>
        <shortName>BLOC-1 subunit 1</shortName>
    </recommendedName>
    <alternativeName>
        <fullName evidence="5">Protein acetyltransferase BLOC1S1</fullName>
        <ecNumber evidence="2">2.3.1.-</ecNumber>
    </alternativeName>
</protein>
<proteinExistence type="evidence at transcript level"/>
<gene>
    <name type="primary">BLOC1S1</name>
</gene>
<reference key="1">
    <citation type="submission" date="2004-11" db="EMBL/GenBank/DDBJ databases">
        <authorList>
            <consortium name="The German cDNA consortium"/>
        </authorList>
    </citation>
    <scope>NUCLEOTIDE SEQUENCE [LARGE SCALE MRNA]</scope>
    <source>
        <tissue>Heart</tissue>
    </source>
</reference>